<reference key="1">
    <citation type="journal article" date="2002" name="Nature">
        <title>Genome sequence of the plant pathogen Ralstonia solanacearum.</title>
        <authorList>
            <person name="Salanoubat M."/>
            <person name="Genin S."/>
            <person name="Artiguenave F."/>
            <person name="Gouzy J."/>
            <person name="Mangenot S."/>
            <person name="Arlat M."/>
            <person name="Billault A."/>
            <person name="Brottier P."/>
            <person name="Camus J.-C."/>
            <person name="Cattolico L."/>
            <person name="Chandler M."/>
            <person name="Choisne N."/>
            <person name="Claudel-Renard C."/>
            <person name="Cunnac S."/>
            <person name="Demange N."/>
            <person name="Gaspin C."/>
            <person name="Lavie M."/>
            <person name="Moisan A."/>
            <person name="Robert C."/>
            <person name="Saurin W."/>
            <person name="Schiex T."/>
            <person name="Siguier P."/>
            <person name="Thebault P."/>
            <person name="Whalen M."/>
            <person name="Wincker P."/>
            <person name="Levy M."/>
            <person name="Weissenbach J."/>
            <person name="Boucher C.A."/>
        </authorList>
    </citation>
    <scope>NUCLEOTIDE SEQUENCE [LARGE SCALE GENOMIC DNA]</scope>
    <source>
        <strain>ATCC BAA-1114 / GMI1000</strain>
    </source>
</reference>
<accession>Q8XV19</accession>
<dbReference type="EMBL" id="AL646052">
    <property type="protein sequence ID" value="CAD16721.1"/>
    <property type="molecule type" value="Genomic_DNA"/>
</dbReference>
<dbReference type="RefSeq" id="WP_003264123.1">
    <property type="nucleotide sequence ID" value="NC_003295.1"/>
</dbReference>
<dbReference type="SMR" id="Q8XV19"/>
<dbReference type="STRING" id="267608.RSc3012"/>
<dbReference type="EnsemblBacteria" id="CAD16721">
    <property type="protein sequence ID" value="CAD16721"/>
    <property type="gene ID" value="RSc3012"/>
</dbReference>
<dbReference type="GeneID" id="97319855"/>
<dbReference type="KEGG" id="rso:RSc3012"/>
<dbReference type="eggNOG" id="COG0197">
    <property type="taxonomic scope" value="Bacteria"/>
</dbReference>
<dbReference type="HOGENOM" id="CLU_078858_2_1_4"/>
<dbReference type="Proteomes" id="UP000001436">
    <property type="component" value="Chromosome"/>
</dbReference>
<dbReference type="GO" id="GO:0022625">
    <property type="term" value="C:cytosolic large ribosomal subunit"/>
    <property type="evidence" value="ECO:0007669"/>
    <property type="project" value="TreeGrafter"/>
</dbReference>
<dbReference type="GO" id="GO:0019843">
    <property type="term" value="F:rRNA binding"/>
    <property type="evidence" value="ECO:0007669"/>
    <property type="project" value="UniProtKB-UniRule"/>
</dbReference>
<dbReference type="GO" id="GO:0003735">
    <property type="term" value="F:structural constituent of ribosome"/>
    <property type="evidence" value="ECO:0007669"/>
    <property type="project" value="InterPro"/>
</dbReference>
<dbReference type="GO" id="GO:0000049">
    <property type="term" value="F:tRNA binding"/>
    <property type="evidence" value="ECO:0007669"/>
    <property type="project" value="UniProtKB-KW"/>
</dbReference>
<dbReference type="GO" id="GO:0006412">
    <property type="term" value="P:translation"/>
    <property type="evidence" value="ECO:0007669"/>
    <property type="project" value="UniProtKB-UniRule"/>
</dbReference>
<dbReference type="CDD" id="cd01433">
    <property type="entry name" value="Ribosomal_L16_L10e"/>
    <property type="match status" value="1"/>
</dbReference>
<dbReference type="FunFam" id="3.90.1170.10:FF:000001">
    <property type="entry name" value="50S ribosomal protein L16"/>
    <property type="match status" value="1"/>
</dbReference>
<dbReference type="Gene3D" id="3.90.1170.10">
    <property type="entry name" value="Ribosomal protein L10e/L16"/>
    <property type="match status" value="1"/>
</dbReference>
<dbReference type="HAMAP" id="MF_01342">
    <property type="entry name" value="Ribosomal_uL16"/>
    <property type="match status" value="1"/>
</dbReference>
<dbReference type="InterPro" id="IPR047873">
    <property type="entry name" value="Ribosomal_uL16"/>
</dbReference>
<dbReference type="InterPro" id="IPR000114">
    <property type="entry name" value="Ribosomal_uL16_bact-type"/>
</dbReference>
<dbReference type="InterPro" id="IPR020798">
    <property type="entry name" value="Ribosomal_uL16_CS"/>
</dbReference>
<dbReference type="InterPro" id="IPR016180">
    <property type="entry name" value="Ribosomal_uL16_dom"/>
</dbReference>
<dbReference type="InterPro" id="IPR036920">
    <property type="entry name" value="Ribosomal_uL16_sf"/>
</dbReference>
<dbReference type="NCBIfam" id="TIGR01164">
    <property type="entry name" value="rplP_bact"/>
    <property type="match status" value="1"/>
</dbReference>
<dbReference type="PANTHER" id="PTHR12220">
    <property type="entry name" value="50S/60S RIBOSOMAL PROTEIN L16"/>
    <property type="match status" value="1"/>
</dbReference>
<dbReference type="PANTHER" id="PTHR12220:SF13">
    <property type="entry name" value="LARGE RIBOSOMAL SUBUNIT PROTEIN UL16M"/>
    <property type="match status" value="1"/>
</dbReference>
<dbReference type="Pfam" id="PF00252">
    <property type="entry name" value="Ribosomal_L16"/>
    <property type="match status" value="1"/>
</dbReference>
<dbReference type="PRINTS" id="PR00060">
    <property type="entry name" value="RIBOSOMALL16"/>
</dbReference>
<dbReference type="SUPFAM" id="SSF54686">
    <property type="entry name" value="Ribosomal protein L16p/L10e"/>
    <property type="match status" value="1"/>
</dbReference>
<dbReference type="PROSITE" id="PS00586">
    <property type="entry name" value="RIBOSOMAL_L16_1"/>
    <property type="match status" value="1"/>
</dbReference>
<gene>
    <name evidence="1" type="primary">rplP</name>
    <name type="ordered locus">RSc3012</name>
    <name type="ORF">RS01077</name>
</gene>
<name>RL16_RALN1</name>
<protein>
    <recommendedName>
        <fullName evidence="1">Large ribosomal subunit protein uL16</fullName>
    </recommendedName>
    <alternativeName>
        <fullName evidence="3">50S ribosomal protein L16</fullName>
    </alternativeName>
</protein>
<organism>
    <name type="scientific">Ralstonia nicotianae (strain ATCC BAA-1114 / GMI1000)</name>
    <name type="common">Ralstonia solanacearum</name>
    <dbReference type="NCBI Taxonomy" id="267608"/>
    <lineage>
        <taxon>Bacteria</taxon>
        <taxon>Pseudomonadati</taxon>
        <taxon>Pseudomonadota</taxon>
        <taxon>Betaproteobacteria</taxon>
        <taxon>Burkholderiales</taxon>
        <taxon>Burkholderiaceae</taxon>
        <taxon>Ralstonia</taxon>
        <taxon>Ralstonia solanacearum species complex</taxon>
    </lineage>
</organism>
<feature type="chain" id="PRO_0000062181" description="Large ribosomal subunit protein uL16">
    <location>
        <begin position="1"/>
        <end position="138"/>
    </location>
</feature>
<feature type="region of interest" description="Disordered" evidence="2">
    <location>
        <begin position="1"/>
        <end position="20"/>
    </location>
</feature>
<feature type="compositionally biased region" description="Basic residues" evidence="2">
    <location>
        <begin position="1"/>
        <end position="13"/>
    </location>
</feature>
<comment type="function">
    <text evidence="1">Binds 23S rRNA and is also seen to make contacts with the A and possibly P site tRNAs.</text>
</comment>
<comment type="subunit">
    <text evidence="1">Part of the 50S ribosomal subunit.</text>
</comment>
<comment type="similarity">
    <text evidence="1">Belongs to the universal ribosomal protein uL16 family.</text>
</comment>
<proteinExistence type="inferred from homology"/>
<sequence length="138" mass="15532">MLQPKRRKYRKEQKGRNTGIATRGNAVSFGEFGLKAMGRGRLTARQIESARRAMTRHIKRGGRIWIRIFPDKPISKKPAEVRMGNGKGNPEYYVAEIQPGKMLYEMDGVGEELAREAFRLAAAKLPIATSFVVRQVGT</sequence>
<evidence type="ECO:0000255" key="1">
    <source>
        <dbReference type="HAMAP-Rule" id="MF_01342"/>
    </source>
</evidence>
<evidence type="ECO:0000256" key="2">
    <source>
        <dbReference type="SAM" id="MobiDB-lite"/>
    </source>
</evidence>
<evidence type="ECO:0000305" key="3"/>
<keyword id="KW-1185">Reference proteome</keyword>
<keyword id="KW-0687">Ribonucleoprotein</keyword>
<keyword id="KW-0689">Ribosomal protein</keyword>
<keyword id="KW-0694">RNA-binding</keyword>
<keyword id="KW-0699">rRNA-binding</keyword>
<keyword id="KW-0820">tRNA-binding</keyword>